<sequence length="321" mass="36654">MQFYFSQIGRLFELIAAGKIRALLLYGPDKGYIEKICTYLIKNLNMLQSSIEYEDLNILSLDILLNSPNFFGQKELIKVRSIGNSLDKNLKTILSSDYINFPVFIGEDMNSSGSVKKFFETEEYLAVVACYHDDEAKIERIILGKLAKTNKVISKEAITYLKTHLKGDHALICSEINKLIFFAHDVHEITLNHVLEVISSEITANGSNLAIYFSKKDYSNFLQELDILKKQNINEVLIIRALIRHYLNLYIVLSKVKNGECLEIAIKSLSPPIFYHNINDFTKIVHALSLTECIKTLKLLQQAEVDYKLNPASFDLFQSIL</sequence>
<keyword id="KW-0235">DNA replication</keyword>
<keyword id="KW-0239">DNA-directed DNA polymerase</keyword>
<keyword id="KW-0548">Nucleotidyltransferase</keyword>
<keyword id="KW-1185">Reference proteome</keyword>
<keyword id="KW-0808">Transferase</keyword>
<organism>
    <name type="scientific">Rickettsia prowazekii (strain Madrid E)</name>
    <dbReference type="NCBI Taxonomy" id="272947"/>
    <lineage>
        <taxon>Bacteria</taxon>
        <taxon>Pseudomonadati</taxon>
        <taxon>Pseudomonadota</taxon>
        <taxon>Alphaproteobacteria</taxon>
        <taxon>Rickettsiales</taxon>
        <taxon>Rickettsiaceae</taxon>
        <taxon>Rickettsieae</taxon>
        <taxon>Rickettsia</taxon>
        <taxon>typhus group</taxon>
    </lineage>
</organism>
<protein>
    <recommendedName>
        <fullName evidence="3">Probable DNA polymerase III subunit delta</fullName>
        <ecNumber>2.7.7.7</ecNumber>
    </recommendedName>
</protein>
<feature type="chain" id="PRO_0000101329" description="Probable DNA polymerase III subunit delta">
    <location>
        <begin position="1"/>
        <end position="321"/>
    </location>
</feature>
<gene>
    <name evidence="3" type="primary">holA</name>
    <name type="ordered locus">RP189</name>
</gene>
<evidence type="ECO:0000250" key="1">
    <source>
        <dbReference type="UniProtKB" id="P28630"/>
    </source>
</evidence>
<evidence type="ECO:0000250" key="2">
    <source>
        <dbReference type="UniProtKB" id="P54459"/>
    </source>
</evidence>
<evidence type="ECO:0000305" key="3"/>
<comment type="function">
    <text evidence="1">Part of the beta sliding clamp loading complex, which hydrolyzes ATP to load the beta clamp onto primed DNA to form the DNA replication pre-initiation complex. DNA polymerase III is a complex, multichain enzyme responsible for most of the replicative synthesis in bacteria. This DNA polymerase also exhibits 3'-5' exonuclease activity. The delta subunit is the wrench that will open the beta subunit dimer. The DNA clamp loading complex (tau(3),delta,delta') is thought to load beta dimers onto DNA by binding ATP which alters the complex's conformation so it can bind beta sliding clamp dimers and open them at one interface. Primed DNA is recognized, ATP is hydrolyzed releasing the clamp loading complex and closing the beta sliding clamp ring around the primed DNA.</text>
</comment>
<comment type="catalytic activity">
    <reaction>
        <text>DNA(n) + a 2'-deoxyribonucleoside 5'-triphosphate = DNA(n+1) + diphosphate</text>
        <dbReference type="Rhea" id="RHEA:22508"/>
        <dbReference type="Rhea" id="RHEA-COMP:17339"/>
        <dbReference type="Rhea" id="RHEA-COMP:17340"/>
        <dbReference type="ChEBI" id="CHEBI:33019"/>
        <dbReference type="ChEBI" id="CHEBI:61560"/>
        <dbReference type="ChEBI" id="CHEBI:173112"/>
        <dbReference type="EC" id="2.7.7.7"/>
    </reaction>
</comment>
<comment type="subunit">
    <text evidence="1 2">Component of the DNA clamp loading complex consisting of tau(3):delta(1):delta'(1) (By similarity). The DNA polymerase III holoenzyme complex contains at least 10 different subunits organized into 3 functionally essential subassemblies: the Pol III core, the beta sliding clamp processivity factor and the clamp-loading complex. The Pol III core (subunits alpha, epsilon and theta) contains the polymerase and the 3'-5' exonuclease proofreading activities. The polymerase is tethered to the template via the dimeric beta sliding clamp processivity factor. The DNA clamp-loading complex assembles the beta sliding clamp onto the primed template and plays a central role in the organization and communication at the replication fork (By similarity).</text>
</comment>
<comment type="similarity">
    <text evidence="3">Belongs to the DNA polymerase HolA subunit family.</text>
</comment>
<reference key="1">
    <citation type="journal article" date="1998" name="Nature">
        <title>The genome sequence of Rickettsia prowazekii and the origin of mitochondria.</title>
        <authorList>
            <person name="Andersson S.G.E."/>
            <person name="Zomorodipour A."/>
            <person name="Andersson J.O."/>
            <person name="Sicheritz-Ponten T."/>
            <person name="Alsmark U.C.M."/>
            <person name="Podowski R.M."/>
            <person name="Naeslund A.K."/>
            <person name="Eriksson A.-S."/>
            <person name="Winkler H.H."/>
            <person name="Kurland C.G."/>
        </authorList>
    </citation>
    <scope>NUCLEOTIDE SEQUENCE [LARGE SCALE GENOMIC DNA]</scope>
    <source>
        <strain>Madrid E</strain>
    </source>
</reference>
<accession>Q9ZDX5</accession>
<name>HOLA_RICPR</name>
<proteinExistence type="inferred from homology"/>
<dbReference type="EC" id="2.7.7.7"/>
<dbReference type="EMBL" id="AJ235270">
    <property type="protein sequence ID" value="CAA14655.1"/>
    <property type="molecule type" value="Genomic_DNA"/>
</dbReference>
<dbReference type="PIR" id="H71729">
    <property type="entry name" value="H71729"/>
</dbReference>
<dbReference type="RefSeq" id="NP_220578.1">
    <property type="nucleotide sequence ID" value="NC_000963.1"/>
</dbReference>
<dbReference type="RefSeq" id="WP_004598599.1">
    <property type="nucleotide sequence ID" value="NC_000963.1"/>
</dbReference>
<dbReference type="SMR" id="Q9ZDX5"/>
<dbReference type="STRING" id="272947.gene:17555271"/>
<dbReference type="EnsemblBacteria" id="CAA14655">
    <property type="protein sequence ID" value="CAA14655"/>
    <property type="gene ID" value="CAA14655"/>
</dbReference>
<dbReference type="GeneID" id="57569316"/>
<dbReference type="KEGG" id="rpr:RP189"/>
<dbReference type="PATRIC" id="fig|272947.5.peg.196"/>
<dbReference type="eggNOG" id="COG1466">
    <property type="taxonomic scope" value="Bacteria"/>
</dbReference>
<dbReference type="HOGENOM" id="CLU_818440_0_0_5"/>
<dbReference type="OrthoDB" id="9804983at2"/>
<dbReference type="Proteomes" id="UP000002480">
    <property type="component" value="Chromosome"/>
</dbReference>
<dbReference type="GO" id="GO:0009360">
    <property type="term" value="C:DNA polymerase III complex"/>
    <property type="evidence" value="ECO:0007669"/>
    <property type="project" value="TreeGrafter"/>
</dbReference>
<dbReference type="GO" id="GO:0003677">
    <property type="term" value="F:DNA binding"/>
    <property type="evidence" value="ECO:0007669"/>
    <property type="project" value="InterPro"/>
</dbReference>
<dbReference type="GO" id="GO:0003887">
    <property type="term" value="F:DNA-directed DNA polymerase activity"/>
    <property type="evidence" value="ECO:0007669"/>
    <property type="project" value="UniProtKB-KW"/>
</dbReference>
<dbReference type="GO" id="GO:0006261">
    <property type="term" value="P:DNA-templated DNA replication"/>
    <property type="evidence" value="ECO:0007669"/>
    <property type="project" value="TreeGrafter"/>
</dbReference>
<dbReference type="Gene3D" id="1.10.8.60">
    <property type="match status" value="1"/>
</dbReference>
<dbReference type="Gene3D" id="1.20.272.10">
    <property type="match status" value="1"/>
</dbReference>
<dbReference type="InterPro" id="IPR008921">
    <property type="entry name" value="DNA_pol3_clamp-load_cplx_C"/>
</dbReference>
<dbReference type="InterPro" id="IPR005790">
    <property type="entry name" value="DNA_polIII_delta"/>
</dbReference>
<dbReference type="InterPro" id="IPR027417">
    <property type="entry name" value="P-loop_NTPase"/>
</dbReference>
<dbReference type="NCBIfam" id="TIGR01128">
    <property type="entry name" value="holA"/>
    <property type="match status" value="1"/>
</dbReference>
<dbReference type="NCBIfam" id="NF005134">
    <property type="entry name" value="PRK06585.1-1"/>
    <property type="match status" value="1"/>
</dbReference>
<dbReference type="PANTHER" id="PTHR34388">
    <property type="entry name" value="DNA POLYMERASE III SUBUNIT DELTA"/>
    <property type="match status" value="1"/>
</dbReference>
<dbReference type="PANTHER" id="PTHR34388:SF1">
    <property type="entry name" value="DNA POLYMERASE III SUBUNIT DELTA"/>
    <property type="match status" value="1"/>
</dbReference>
<dbReference type="SUPFAM" id="SSF52540">
    <property type="entry name" value="P-loop containing nucleoside triphosphate hydrolases"/>
    <property type="match status" value="1"/>
</dbReference>
<dbReference type="SUPFAM" id="SSF48019">
    <property type="entry name" value="post-AAA+ oligomerization domain-like"/>
    <property type="match status" value="1"/>
</dbReference>